<protein>
    <recommendedName>
        <fullName evidence="6">GLIPR1-like protein 1</fullName>
    </recommendedName>
</protein>
<reference evidence="8" key="1">
    <citation type="journal article" date="2005" name="Science">
        <title>The transcriptional landscape of the mammalian genome.</title>
        <authorList>
            <person name="Carninci P."/>
            <person name="Kasukawa T."/>
            <person name="Katayama S."/>
            <person name="Gough J."/>
            <person name="Frith M.C."/>
            <person name="Maeda N."/>
            <person name="Oyama R."/>
            <person name="Ravasi T."/>
            <person name="Lenhard B."/>
            <person name="Wells C."/>
            <person name="Kodzius R."/>
            <person name="Shimokawa K."/>
            <person name="Bajic V.B."/>
            <person name="Brenner S.E."/>
            <person name="Batalov S."/>
            <person name="Forrest A.R."/>
            <person name="Zavolan M."/>
            <person name="Davis M.J."/>
            <person name="Wilming L.G."/>
            <person name="Aidinis V."/>
            <person name="Allen J.E."/>
            <person name="Ambesi-Impiombato A."/>
            <person name="Apweiler R."/>
            <person name="Aturaliya R.N."/>
            <person name="Bailey T.L."/>
            <person name="Bansal M."/>
            <person name="Baxter L."/>
            <person name="Beisel K.W."/>
            <person name="Bersano T."/>
            <person name="Bono H."/>
            <person name="Chalk A.M."/>
            <person name="Chiu K.P."/>
            <person name="Choudhary V."/>
            <person name="Christoffels A."/>
            <person name="Clutterbuck D.R."/>
            <person name="Crowe M.L."/>
            <person name="Dalla E."/>
            <person name="Dalrymple B.P."/>
            <person name="de Bono B."/>
            <person name="Della Gatta G."/>
            <person name="di Bernardo D."/>
            <person name="Down T."/>
            <person name="Engstrom P."/>
            <person name="Fagiolini M."/>
            <person name="Faulkner G."/>
            <person name="Fletcher C.F."/>
            <person name="Fukushima T."/>
            <person name="Furuno M."/>
            <person name="Futaki S."/>
            <person name="Gariboldi M."/>
            <person name="Georgii-Hemming P."/>
            <person name="Gingeras T.R."/>
            <person name="Gojobori T."/>
            <person name="Green R.E."/>
            <person name="Gustincich S."/>
            <person name="Harbers M."/>
            <person name="Hayashi Y."/>
            <person name="Hensch T.K."/>
            <person name="Hirokawa N."/>
            <person name="Hill D."/>
            <person name="Huminiecki L."/>
            <person name="Iacono M."/>
            <person name="Ikeo K."/>
            <person name="Iwama A."/>
            <person name="Ishikawa T."/>
            <person name="Jakt M."/>
            <person name="Kanapin A."/>
            <person name="Katoh M."/>
            <person name="Kawasawa Y."/>
            <person name="Kelso J."/>
            <person name="Kitamura H."/>
            <person name="Kitano H."/>
            <person name="Kollias G."/>
            <person name="Krishnan S.P."/>
            <person name="Kruger A."/>
            <person name="Kummerfeld S.K."/>
            <person name="Kurochkin I.V."/>
            <person name="Lareau L.F."/>
            <person name="Lazarevic D."/>
            <person name="Lipovich L."/>
            <person name="Liu J."/>
            <person name="Liuni S."/>
            <person name="McWilliam S."/>
            <person name="Madan Babu M."/>
            <person name="Madera M."/>
            <person name="Marchionni L."/>
            <person name="Matsuda H."/>
            <person name="Matsuzawa S."/>
            <person name="Miki H."/>
            <person name="Mignone F."/>
            <person name="Miyake S."/>
            <person name="Morris K."/>
            <person name="Mottagui-Tabar S."/>
            <person name="Mulder N."/>
            <person name="Nakano N."/>
            <person name="Nakauchi H."/>
            <person name="Ng P."/>
            <person name="Nilsson R."/>
            <person name="Nishiguchi S."/>
            <person name="Nishikawa S."/>
            <person name="Nori F."/>
            <person name="Ohara O."/>
            <person name="Okazaki Y."/>
            <person name="Orlando V."/>
            <person name="Pang K.C."/>
            <person name="Pavan W.J."/>
            <person name="Pavesi G."/>
            <person name="Pesole G."/>
            <person name="Petrovsky N."/>
            <person name="Piazza S."/>
            <person name="Reed J."/>
            <person name="Reid J.F."/>
            <person name="Ring B.Z."/>
            <person name="Ringwald M."/>
            <person name="Rost B."/>
            <person name="Ruan Y."/>
            <person name="Salzberg S.L."/>
            <person name="Sandelin A."/>
            <person name="Schneider C."/>
            <person name="Schoenbach C."/>
            <person name="Sekiguchi K."/>
            <person name="Semple C.A."/>
            <person name="Seno S."/>
            <person name="Sessa L."/>
            <person name="Sheng Y."/>
            <person name="Shibata Y."/>
            <person name="Shimada H."/>
            <person name="Shimada K."/>
            <person name="Silva D."/>
            <person name="Sinclair B."/>
            <person name="Sperling S."/>
            <person name="Stupka E."/>
            <person name="Sugiura K."/>
            <person name="Sultana R."/>
            <person name="Takenaka Y."/>
            <person name="Taki K."/>
            <person name="Tammoja K."/>
            <person name="Tan S.L."/>
            <person name="Tang S."/>
            <person name="Taylor M.S."/>
            <person name="Tegner J."/>
            <person name="Teichmann S.A."/>
            <person name="Ueda H.R."/>
            <person name="van Nimwegen E."/>
            <person name="Verardo R."/>
            <person name="Wei C.L."/>
            <person name="Yagi K."/>
            <person name="Yamanishi H."/>
            <person name="Zabarovsky E."/>
            <person name="Zhu S."/>
            <person name="Zimmer A."/>
            <person name="Hide W."/>
            <person name="Bult C."/>
            <person name="Grimmond S.M."/>
            <person name="Teasdale R.D."/>
            <person name="Liu E.T."/>
            <person name="Brusic V."/>
            <person name="Quackenbush J."/>
            <person name="Wahlestedt C."/>
            <person name="Mattick J.S."/>
            <person name="Hume D.A."/>
            <person name="Kai C."/>
            <person name="Sasaki D."/>
            <person name="Tomaru Y."/>
            <person name="Fukuda S."/>
            <person name="Kanamori-Katayama M."/>
            <person name="Suzuki M."/>
            <person name="Aoki J."/>
            <person name="Arakawa T."/>
            <person name="Iida J."/>
            <person name="Imamura K."/>
            <person name="Itoh M."/>
            <person name="Kato T."/>
            <person name="Kawaji H."/>
            <person name="Kawagashira N."/>
            <person name="Kawashima T."/>
            <person name="Kojima M."/>
            <person name="Kondo S."/>
            <person name="Konno H."/>
            <person name="Nakano K."/>
            <person name="Ninomiya N."/>
            <person name="Nishio T."/>
            <person name="Okada M."/>
            <person name="Plessy C."/>
            <person name="Shibata K."/>
            <person name="Shiraki T."/>
            <person name="Suzuki S."/>
            <person name="Tagami M."/>
            <person name="Waki K."/>
            <person name="Watahiki A."/>
            <person name="Okamura-Oho Y."/>
            <person name="Suzuki H."/>
            <person name="Kawai J."/>
            <person name="Hayashizaki Y."/>
        </authorList>
    </citation>
    <scope>NUCLEOTIDE SEQUENCE [LARGE SCALE MRNA]</scope>
    <source>
        <strain evidence="8">C57BL/6J</strain>
        <tissue evidence="8">Testis</tissue>
    </source>
</reference>
<reference evidence="10" key="2">
    <citation type="journal article" date="2009" name="PLoS Biol.">
        <title>Lineage-specific biology revealed by a finished genome assembly of the mouse.</title>
        <authorList>
            <person name="Church D.M."/>
            <person name="Goodstadt L."/>
            <person name="Hillier L.W."/>
            <person name="Zody M.C."/>
            <person name="Goldstein S."/>
            <person name="She X."/>
            <person name="Bult C.J."/>
            <person name="Agarwala R."/>
            <person name="Cherry J.L."/>
            <person name="DiCuccio M."/>
            <person name="Hlavina W."/>
            <person name="Kapustin Y."/>
            <person name="Meric P."/>
            <person name="Maglott D."/>
            <person name="Birtle Z."/>
            <person name="Marques A.C."/>
            <person name="Graves T."/>
            <person name="Zhou S."/>
            <person name="Teague B."/>
            <person name="Potamousis K."/>
            <person name="Churas C."/>
            <person name="Place M."/>
            <person name="Herschleb J."/>
            <person name="Runnheim R."/>
            <person name="Forrest D."/>
            <person name="Amos-Landgraf J."/>
            <person name="Schwartz D.C."/>
            <person name="Cheng Z."/>
            <person name="Lindblad-Toh K."/>
            <person name="Eichler E.E."/>
            <person name="Ponting C.P."/>
        </authorList>
    </citation>
    <scope>NUCLEOTIDE SEQUENCE [LARGE SCALE GENOMIC DNA]</scope>
    <source>
        <strain evidence="10">C57BL/6J</strain>
    </source>
</reference>
<reference key="3">
    <citation type="journal article" date="2010" name="Cell">
        <title>A tissue-specific atlas of mouse protein phosphorylation and expression.</title>
        <authorList>
            <person name="Huttlin E.L."/>
            <person name="Jedrychowski M.P."/>
            <person name="Elias J.E."/>
            <person name="Goswami T."/>
            <person name="Rad R."/>
            <person name="Beausoleil S.A."/>
            <person name="Villen J."/>
            <person name="Haas W."/>
            <person name="Sowa M.E."/>
            <person name="Gygi S.P."/>
        </authorList>
    </citation>
    <scope>IDENTIFICATION BY MASS SPECTROMETRY [LARGE SCALE ANALYSIS]</scope>
    <source>
        <tissue>Testis</tissue>
    </source>
</reference>
<reference evidence="6" key="4">
    <citation type="journal article" date="2010" name="Endocrinology">
        <title>Glioma pathogenesis-related 1-like 1 is testis enriched, dynamically modified, and redistributed during male germ cell maturation and has a potential role in sperm-oocyte binding.</title>
        <authorList>
            <person name="Gibbs G.M."/>
            <person name="Lo J.C."/>
            <person name="Nixon B."/>
            <person name="Jamsai D."/>
            <person name="O'Connor A.E."/>
            <person name="Rijal S."/>
            <person name="Sanchez-Partida L.G."/>
            <person name="Hearn M.T."/>
            <person name="Bianco D.M."/>
            <person name="O'Bryan M.K."/>
        </authorList>
    </citation>
    <scope>FUNCTION</scope>
    <scope>SUBCELLULAR LOCATION</scope>
    <scope>TISSUE SPECIFICITY</scope>
    <scope>DEVELOPMENTAL STAGE</scope>
    <scope>GLYCOSYLATION</scope>
</reference>
<reference key="5">
    <citation type="journal article" date="2019" name="BMC Biol.">
        <title>GLIPR1L1 is an IZUMO-binding protein required for optimal fertilization in the mouse.</title>
        <authorList>
            <person name="Gaikwad A.S."/>
            <person name="Anderson A.L."/>
            <person name="Merriner D.J."/>
            <person name="O'Connor A.E."/>
            <person name="Houston B.J."/>
            <person name="Aitken R.J."/>
            <person name="O'Bryan M.K."/>
            <person name="Nixon B."/>
        </authorList>
    </citation>
    <scope>FUNCTION</scope>
    <scope>SUBUNIT</scope>
    <scope>INTERACTION WITH IZUMO1</scope>
    <scope>TISSUE SPECIFICITY</scope>
    <scope>DISRUPTION PHENOTYPE</scope>
    <scope>SUBCELLULAR LOCATION</scope>
</reference>
<gene>
    <name evidence="9" type="primary">Glipr1l1</name>
</gene>
<name>GPRL1_MOUSE</name>
<comment type="function">
    <text evidence="1 4 5">Required for optimal fertilization at the stage of sperm-oocyte fusion, plays a role in optimizing acrosome function, the translocation of IZUMO1 during the acrosome reaction and the fertilization process (PubMed:20219979, PubMed:31672133). Component of epididymosomes, one type of membranous microvesicules which mediate the transfer of lipids and proteins to spermatozoa plasma membrane during epididymal maturation. Also component of the CD9-positive microvesicules found in the cauda region.</text>
</comment>
<comment type="subunit">
    <text evidence="5">Part of a oolemmal binding multimeric complex (IZUMO1 complex) composed at least of IZUMO1 and GLIPR1L1; the complex assemblage is influenced by the maturation status of the male germ cell (PubMed:31672133). Interacts with IZUMO1 (PubMed:31672133).</text>
</comment>
<comment type="subcellular location">
    <subcellularLocation>
        <location evidence="4 5">Cytoplasmic vesicle</location>
        <location evidence="4 5">Secretory vesicle</location>
        <location evidence="4 5">Acrosome</location>
    </subcellularLocation>
    <subcellularLocation>
        <location evidence="7">Cell membrane</location>
        <topology evidence="7">Peripheral membrane protein</topology>
        <orientation evidence="7">Extracellular side</orientation>
    </subcellularLocation>
    <subcellularLocation>
        <location evidence="5">Membrane raft</location>
    </subcellularLocation>
    <subcellularLocation>
        <location evidence="4">Secreted</location>
    </subcellularLocation>
    <text evidence="1 4 5">Located in the connecting piece of elongated spermatids and sperm (PubMed:20219979, PubMed:31672133). Also located in the apical region of the sperm head after sperm capacitation (PubMed:20219979, PubMed:31672133). Weakly attached to the cell membrane and later secreted into the extracellular space (PubMed:20219979). Located on sperm equatorial segment and neck (By similarity). Associated with epididymosomes from the caput and cauda epididymis (By similarity).</text>
</comment>
<comment type="tissue specificity">
    <text evidence="4 5">Expressed in testis (at protein level). Little or no expression in other tissues tested.</text>
</comment>
<comment type="developmental stage">
    <text evidence="4">Detected at postnatal day 14 in developing testis (at protein level). Detected from postnatal day 18 onwards, with increasing levels through to postnatal day 36.</text>
</comment>
<comment type="PTM">
    <text evidence="1 4">N-glycosylated (PubMed:20219979). N-glycosylation decreases during the transit in the caput.</text>
</comment>
<comment type="disruption phenotype">
    <text evidence="5">Mutants have normal number of pups per litter, body weight, testis weight and daily sperm production (PubMed:31672133). Mutant sperm have a significantly reduced ability to undergo the progesterone-induced acrosome reaction compared to wild type (PubMed:31672133).</text>
</comment>
<comment type="similarity">
    <text evidence="6">Belongs to the CRISP family.</text>
</comment>
<feature type="signal peptide" evidence="2">
    <location>
        <begin position="1"/>
        <end position="27"/>
    </location>
</feature>
<feature type="chain" id="PRO_5009348226" description="GLIPR1-like protein 1">
    <location>
        <begin position="28"/>
        <end position="236"/>
    </location>
</feature>
<feature type="domain" description="SCP" evidence="2">
    <location>
        <begin position="46"/>
        <end position="178"/>
    </location>
</feature>
<feature type="glycosylation site" description="N-linked (GlcNAc...) asparagine" evidence="3">
    <location>
        <position position="126"/>
    </location>
</feature>
<proteinExistence type="evidence at protein level"/>
<accession>Q9DAG6</accession>
<evidence type="ECO:0000250" key="1">
    <source>
        <dbReference type="UniProtKB" id="Q32LB5"/>
    </source>
</evidence>
<evidence type="ECO:0000255" key="2"/>
<evidence type="ECO:0000255" key="3">
    <source>
        <dbReference type="PROSITE-ProRule" id="PRU00498"/>
    </source>
</evidence>
<evidence type="ECO:0000269" key="4">
    <source>
    </source>
</evidence>
<evidence type="ECO:0000269" key="5">
    <source>
    </source>
</evidence>
<evidence type="ECO:0000305" key="6"/>
<evidence type="ECO:0000305" key="7">
    <source>
    </source>
</evidence>
<evidence type="ECO:0000312" key="8">
    <source>
        <dbReference type="EMBL" id="BAB24280.1"/>
    </source>
</evidence>
<evidence type="ECO:0000312" key="9">
    <source>
        <dbReference type="MGI" id="MGI:1916536"/>
    </source>
</evidence>
<evidence type="ECO:0000312" key="10">
    <source>
        <dbReference type="Proteomes" id="UP000000589"/>
    </source>
</evidence>
<dbReference type="EMBL" id="AC159470">
    <property type="status" value="NOT_ANNOTATED_CDS"/>
    <property type="molecule type" value="Genomic_DNA"/>
</dbReference>
<dbReference type="EMBL" id="AK005860">
    <property type="protein sequence ID" value="BAB24280.1"/>
    <property type="molecule type" value="mRNA"/>
</dbReference>
<dbReference type="CCDS" id="CCDS48691.1"/>
<dbReference type="RefSeq" id="NP_081294.1">
    <property type="nucleotide sequence ID" value="NM_027018.1"/>
</dbReference>
<dbReference type="SMR" id="Q9DAG6"/>
<dbReference type="FunCoup" id="Q9DAG6">
    <property type="interactions" value="1"/>
</dbReference>
<dbReference type="STRING" id="10090.ENSMUSP00000073302"/>
<dbReference type="GlyCosmos" id="Q9DAG6">
    <property type="glycosylation" value="1 site, No reported glycans"/>
</dbReference>
<dbReference type="GlyGen" id="Q9DAG6">
    <property type="glycosylation" value="1 site"/>
</dbReference>
<dbReference type="PhosphoSitePlus" id="Q9DAG6"/>
<dbReference type="SwissPalm" id="Q9DAG6"/>
<dbReference type="PaxDb" id="10090-ENSMUSP00000073302"/>
<dbReference type="ProteomicsDB" id="267658"/>
<dbReference type="Ensembl" id="ENSMUST00000073617.5">
    <property type="protein sequence ID" value="ENSMUSP00000073302.5"/>
    <property type="gene ID" value="ENSMUSG00000020213.7"/>
</dbReference>
<dbReference type="GeneID" id="69286"/>
<dbReference type="KEGG" id="mmu:69286"/>
<dbReference type="UCSC" id="uc007hak.2">
    <property type="organism name" value="mouse"/>
</dbReference>
<dbReference type="AGR" id="MGI:1916536"/>
<dbReference type="CTD" id="256710"/>
<dbReference type="MGI" id="MGI:1916536">
    <property type="gene designation" value="Glipr1l1"/>
</dbReference>
<dbReference type="VEuPathDB" id="HostDB:ENSMUSG00000020213"/>
<dbReference type="eggNOG" id="KOG3017">
    <property type="taxonomic scope" value="Eukaryota"/>
</dbReference>
<dbReference type="GeneTree" id="ENSGT00940000162547"/>
<dbReference type="HOGENOM" id="CLU_035730_2_0_1"/>
<dbReference type="InParanoid" id="Q9DAG6"/>
<dbReference type="OMA" id="HDKCRNV"/>
<dbReference type="OrthoDB" id="43654at2759"/>
<dbReference type="PhylomeDB" id="Q9DAG6"/>
<dbReference type="TreeFam" id="TF316148"/>
<dbReference type="BioGRID-ORCS" id="69286">
    <property type="hits" value="1 hit in 77 CRISPR screens"/>
</dbReference>
<dbReference type="PRO" id="PR:Q9DAG6"/>
<dbReference type="Proteomes" id="UP000000589">
    <property type="component" value="Chromosome 10"/>
</dbReference>
<dbReference type="RNAct" id="Q9DAG6">
    <property type="molecule type" value="protein"/>
</dbReference>
<dbReference type="Bgee" id="ENSMUSG00000020213">
    <property type="expression patterns" value="Expressed in spermatid and 6 other cell types or tissues"/>
</dbReference>
<dbReference type="GO" id="GO:0001669">
    <property type="term" value="C:acrosomal vesicle"/>
    <property type="evidence" value="ECO:0000314"/>
    <property type="project" value="UniProtKB"/>
</dbReference>
<dbReference type="GO" id="GO:0005576">
    <property type="term" value="C:extracellular region"/>
    <property type="evidence" value="ECO:0007669"/>
    <property type="project" value="UniProtKB-SubCell"/>
</dbReference>
<dbReference type="GO" id="GO:0045121">
    <property type="term" value="C:membrane raft"/>
    <property type="evidence" value="ECO:0007669"/>
    <property type="project" value="UniProtKB-SubCell"/>
</dbReference>
<dbReference type="GO" id="GO:0002081">
    <property type="term" value="C:outer acrosomal membrane"/>
    <property type="evidence" value="ECO:0000314"/>
    <property type="project" value="UniProt"/>
</dbReference>
<dbReference type="GO" id="GO:0005886">
    <property type="term" value="C:plasma membrane"/>
    <property type="evidence" value="ECO:0007669"/>
    <property type="project" value="UniProtKB-SubCell"/>
</dbReference>
<dbReference type="GO" id="GO:0098635">
    <property type="term" value="C:protein complex involved in cell-cell adhesion"/>
    <property type="evidence" value="ECO:0000314"/>
    <property type="project" value="UniProtKB"/>
</dbReference>
<dbReference type="GO" id="GO:0120212">
    <property type="term" value="C:sperm head-tail coupling apparatus"/>
    <property type="evidence" value="ECO:0000314"/>
    <property type="project" value="UniProtKB"/>
</dbReference>
<dbReference type="GO" id="GO:0060090">
    <property type="term" value="F:molecular adaptor activity"/>
    <property type="evidence" value="ECO:0000314"/>
    <property type="project" value="UniProt"/>
</dbReference>
<dbReference type="GO" id="GO:0007339">
    <property type="term" value="P:binding of sperm to zona pellucida"/>
    <property type="evidence" value="ECO:0000315"/>
    <property type="project" value="MGI"/>
</dbReference>
<dbReference type="GO" id="GO:0007342">
    <property type="term" value="P:fusion of sperm to egg plasma membrane involved in single fertilization"/>
    <property type="evidence" value="ECO:0000315"/>
    <property type="project" value="UniProtKB"/>
</dbReference>
<dbReference type="GO" id="GO:0060476">
    <property type="term" value="P:protein localization involved in acrosome reaction"/>
    <property type="evidence" value="ECO:0000314"/>
    <property type="project" value="UniProt"/>
</dbReference>
<dbReference type="CDD" id="cd05385">
    <property type="entry name" value="CAP_GLIPR1-like"/>
    <property type="match status" value="1"/>
</dbReference>
<dbReference type="FunFam" id="3.40.33.10:FF:000087">
    <property type="entry name" value="GLIPR1-like protein 1"/>
    <property type="match status" value="1"/>
</dbReference>
<dbReference type="Gene3D" id="3.40.33.10">
    <property type="entry name" value="CAP"/>
    <property type="match status" value="1"/>
</dbReference>
<dbReference type="InterPro" id="IPR018244">
    <property type="entry name" value="Allrgn_V5/Tpx1_CS"/>
</dbReference>
<dbReference type="InterPro" id="IPR014044">
    <property type="entry name" value="CAP_dom"/>
</dbReference>
<dbReference type="InterPro" id="IPR035940">
    <property type="entry name" value="CAP_sf"/>
</dbReference>
<dbReference type="InterPro" id="IPR001283">
    <property type="entry name" value="CRISP-related"/>
</dbReference>
<dbReference type="InterPro" id="IPR034121">
    <property type="entry name" value="SCP_GLIPR-1-like"/>
</dbReference>
<dbReference type="InterPro" id="IPR002413">
    <property type="entry name" value="V5_allergen-like"/>
</dbReference>
<dbReference type="PANTHER" id="PTHR10334">
    <property type="entry name" value="CYSTEINE-RICH SECRETORY PROTEIN-RELATED"/>
    <property type="match status" value="1"/>
</dbReference>
<dbReference type="Pfam" id="PF00188">
    <property type="entry name" value="CAP"/>
    <property type="match status" value="1"/>
</dbReference>
<dbReference type="PRINTS" id="PR00838">
    <property type="entry name" value="V5ALLERGEN"/>
</dbReference>
<dbReference type="PRINTS" id="PR00837">
    <property type="entry name" value="V5TPXLIKE"/>
</dbReference>
<dbReference type="SMART" id="SM00198">
    <property type="entry name" value="SCP"/>
    <property type="match status" value="1"/>
</dbReference>
<dbReference type="SUPFAM" id="SSF55797">
    <property type="entry name" value="PR-1-like"/>
    <property type="match status" value="1"/>
</dbReference>
<dbReference type="PROSITE" id="PS01009">
    <property type="entry name" value="CRISP_1"/>
    <property type="match status" value="1"/>
</dbReference>
<dbReference type="PROSITE" id="PS01010">
    <property type="entry name" value="CRISP_2"/>
    <property type="match status" value="1"/>
</dbReference>
<keyword id="KW-1003">Cell membrane</keyword>
<keyword id="KW-0968">Cytoplasmic vesicle</keyword>
<keyword id="KW-0278">Fertilization</keyword>
<keyword id="KW-0325">Glycoprotein</keyword>
<keyword id="KW-0472">Membrane</keyword>
<keyword id="KW-1185">Reference proteome</keyword>
<keyword id="KW-0964">Secreted</keyword>
<keyword id="KW-0732">Signal</keyword>
<organism evidence="8">
    <name type="scientific">Mus musculus</name>
    <name type="common">Mouse</name>
    <dbReference type="NCBI Taxonomy" id="10090"/>
    <lineage>
        <taxon>Eukaryota</taxon>
        <taxon>Metazoa</taxon>
        <taxon>Chordata</taxon>
        <taxon>Craniata</taxon>
        <taxon>Vertebrata</taxon>
        <taxon>Euteleostomi</taxon>
        <taxon>Mammalia</taxon>
        <taxon>Eutheria</taxon>
        <taxon>Euarchontoglires</taxon>
        <taxon>Glires</taxon>
        <taxon>Rodentia</taxon>
        <taxon>Myomorpha</taxon>
        <taxon>Muroidea</taxon>
        <taxon>Muridae</taxon>
        <taxon>Murinae</taxon>
        <taxon>Mus</taxon>
        <taxon>Mus</taxon>
    </lineage>
</organism>
<sequence>MALKKKLNFLWTLVLYLIASRLPKAFGKDLPRVPTITDPKFIDAFLNIHNELRRKVQPPAADMNQLFWDQQLAKLAKAWTRECKLAHNPCIKQRYECLEDYDFIGENIYLGRIETQPEDVVINWYNESKYFNFDFNTCSEMCGHYTQVVWAKTVKIGCAVSNCPNLKGFSAGLFVCNYSPAGNFIGFRPYTRGDSCSMCGQKTCENSLCRPMNRKTPHHKAACHVLVLGFILQSLL</sequence>